<proteinExistence type="evidence at transcript level"/>
<comment type="function">
    <text evidence="1">Lacks deubiquitinase activity.</text>
</comment>
<comment type="subunit">
    <text evidence="1">Does not bind ubiquitin or ubiquitin-like proteins.</text>
</comment>
<comment type="subcellular location">
    <subcellularLocation>
        <location evidence="1">Cytoplasm</location>
    </subcellularLocation>
    <subcellularLocation>
        <location evidence="1">Endoplasmic reticulum membrane</location>
        <topology evidence="1">Peripheral membrane protein</topology>
    </subcellularLocation>
    <subcellularLocation>
        <location evidence="1">Nucleus envelope</location>
    </subcellularLocation>
</comment>
<comment type="domain">
    <text evidence="1">The N-terminal region that precedes the OTU domain mediates interaction with cellular membranes.</text>
</comment>
<comment type="similarity">
    <text evidence="3">Belongs to the peptidase C65 family. Otulin subfamily.</text>
</comment>
<comment type="caution">
    <text evidence="1">Although highly similar to the deubiquitinase OTULIN, lacks both the conserved active site residue Cys at position 136 which is replaced by an Asp residue and the conserved active site residue His at residue 347 which is replaced by a Gln residue, and does not have deubiquitinase activity.</text>
</comment>
<name>OTULL_RAT</name>
<reference key="1">
    <citation type="journal article" date="2004" name="Genome Res.">
        <title>The status, quality, and expansion of the NIH full-length cDNA project: the Mammalian Gene Collection (MGC).</title>
        <authorList>
            <consortium name="The MGC Project Team"/>
        </authorList>
    </citation>
    <scope>NUCLEOTIDE SEQUENCE [LARGE SCALE MRNA]</scope>
    <source>
        <tissue>Prostate</tissue>
    </source>
</reference>
<accession>Q3B7D8</accession>
<sequence>MKATRSAPRERERSRTTSGSDQVHSWILVPSQVLHAVWRIARASVMTALSLLSATLSYFRSLYLYLGHQLKWWIGYLQRKFKRNLSVEAEVDLLSYCAREWKGETPRARLMRKAYEELFWRYHVKCVRPVKRDNYDALRSVLFQIFSQGLSFPSWMKEKDIVKLPEKLLFSQGCNWIQQYSFGPEKYTGSNVFGKLRKCVELLKLQWTEFSGMRDYHKRGSMCNSLFSDAILECKLYEALKFLMLYQVTEVYEQMKTNKIVPSLFRLLFSRESSPDPLSFMMNHLNSIGDTCGLDQIDMFILGYSLQVKIKVFRLFKFNSRDFAVYYPEEPLREWPEISLLTENDHQYHIPVF</sequence>
<evidence type="ECO:0000250" key="1">
    <source>
        <dbReference type="UniProtKB" id="Q9NUU6"/>
    </source>
</evidence>
<evidence type="ECO:0000255" key="2">
    <source>
        <dbReference type="PROSITE-ProRule" id="PRU00139"/>
    </source>
</evidence>
<evidence type="ECO:0000305" key="3"/>
<evidence type="ECO:0000312" key="4">
    <source>
        <dbReference type="RGD" id="1563205"/>
    </source>
</evidence>
<dbReference type="EMBL" id="BC107649">
    <property type="protein sequence ID" value="AAI07650.1"/>
    <property type="molecule type" value="mRNA"/>
</dbReference>
<dbReference type="RefSeq" id="NP_001032737.1">
    <property type="nucleotide sequence ID" value="NM_001037648.1"/>
</dbReference>
<dbReference type="SMR" id="Q3B7D8"/>
<dbReference type="FunCoup" id="Q3B7D8">
    <property type="interactions" value="380"/>
</dbReference>
<dbReference type="STRING" id="10116.ENSRNOP00000062926"/>
<dbReference type="PhosphoSitePlus" id="Q3B7D8"/>
<dbReference type="PaxDb" id="10116-ENSRNOP00000062926"/>
<dbReference type="GeneID" id="310190"/>
<dbReference type="KEGG" id="rno:310190"/>
<dbReference type="UCSC" id="RGD:1563205">
    <property type="organism name" value="rat"/>
</dbReference>
<dbReference type="AGR" id="RGD:1563205"/>
<dbReference type="CTD" id="54491"/>
<dbReference type="RGD" id="1563205">
    <property type="gene designation" value="Otulinl"/>
</dbReference>
<dbReference type="eggNOG" id="ENOG502QVY0">
    <property type="taxonomic scope" value="Eukaryota"/>
</dbReference>
<dbReference type="InParanoid" id="Q3B7D8"/>
<dbReference type="OrthoDB" id="5962728at2759"/>
<dbReference type="PhylomeDB" id="Q3B7D8"/>
<dbReference type="PRO" id="PR:Q3B7D8"/>
<dbReference type="Proteomes" id="UP000002494">
    <property type="component" value="Unplaced"/>
</dbReference>
<dbReference type="GO" id="GO:0005737">
    <property type="term" value="C:cytoplasm"/>
    <property type="evidence" value="ECO:0000250"/>
    <property type="project" value="UniProtKB"/>
</dbReference>
<dbReference type="GO" id="GO:0098554">
    <property type="term" value="C:cytoplasmic side of endoplasmic reticulum membrane"/>
    <property type="evidence" value="ECO:0000250"/>
    <property type="project" value="UniProtKB"/>
</dbReference>
<dbReference type="GO" id="GO:0005635">
    <property type="term" value="C:nuclear envelope"/>
    <property type="evidence" value="ECO:0000266"/>
    <property type="project" value="RGD"/>
</dbReference>
<dbReference type="GO" id="GO:1990108">
    <property type="term" value="P:protein linear deubiquitination"/>
    <property type="evidence" value="ECO:0000250"/>
    <property type="project" value="UniProtKB"/>
</dbReference>
<dbReference type="InterPro" id="IPR023235">
    <property type="entry name" value="FAM105"/>
</dbReference>
<dbReference type="InterPro" id="IPR023236">
    <property type="entry name" value="OTULINL"/>
</dbReference>
<dbReference type="PANTHER" id="PTHR33662:SF1">
    <property type="entry name" value="INACTIVE UBIQUITIN THIOESTERASE OTULINL"/>
    <property type="match status" value="1"/>
</dbReference>
<dbReference type="PANTHER" id="PTHR33662">
    <property type="entry name" value="OTU DEUBIQUITINASE WITH LINEAR LINKAGE-SPECIFICITY A-RELATED"/>
    <property type="match status" value="1"/>
</dbReference>
<dbReference type="Pfam" id="PF16218">
    <property type="entry name" value="Peptidase_C101"/>
    <property type="match status" value="1"/>
</dbReference>
<dbReference type="PRINTS" id="PR02055">
    <property type="entry name" value="PROTEINF105"/>
</dbReference>
<dbReference type="PRINTS" id="PR02056">
    <property type="entry name" value="PROTEINF105A"/>
</dbReference>
<organism>
    <name type="scientific">Rattus norvegicus</name>
    <name type="common">Rat</name>
    <dbReference type="NCBI Taxonomy" id="10116"/>
    <lineage>
        <taxon>Eukaryota</taxon>
        <taxon>Metazoa</taxon>
        <taxon>Chordata</taxon>
        <taxon>Craniata</taxon>
        <taxon>Vertebrata</taxon>
        <taxon>Euteleostomi</taxon>
        <taxon>Mammalia</taxon>
        <taxon>Eutheria</taxon>
        <taxon>Euarchontoglires</taxon>
        <taxon>Glires</taxon>
        <taxon>Rodentia</taxon>
        <taxon>Myomorpha</taxon>
        <taxon>Muroidea</taxon>
        <taxon>Muridae</taxon>
        <taxon>Murinae</taxon>
        <taxon>Rattus</taxon>
    </lineage>
</organism>
<gene>
    <name evidence="4" type="primary">Otulinl</name>
    <name evidence="4" type="synonym">Fam105a</name>
</gene>
<keyword id="KW-0963">Cytoplasm</keyword>
<keyword id="KW-0256">Endoplasmic reticulum</keyword>
<keyword id="KW-0472">Membrane</keyword>
<keyword id="KW-0539">Nucleus</keyword>
<keyword id="KW-1185">Reference proteome</keyword>
<feature type="chain" id="PRO_0000274406" description="Inactive ubiquitin thioesterase OTULINL">
    <location>
        <begin position="1"/>
        <end position="353"/>
    </location>
</feature>
<feature type="domain" description="OTU" evidence="2">
    <location>
        <begin position="125"/>
        <end position="353"/>
    </location>
</feature>
<feature type="region of interest" description="Required for membrane binding" evidence="1">
    <location>
        <begin position="1"/>
        <end position="80"/>
    </location>
</feature>
<protein>
    <recommendedName>
        <fullName>Inactive ubiquitin thioesterase OTULINL</fullName>
    </recommendedName>
</protein>